<protein>
    <recommendedName>
        <fullName evidence="1">UPF0342 protein SGO_1370</fullName>
    </recommendedName>
</protein>
<organism>
    <name type="scientific">Streptococcus gordonii (strain Challis / ATCC 35105 / BCRC 15272 / CH1 / DL1 / V288)</name>
    <dbReference type="NCBI Taxonomy" id="467705"/>
    <lineage>
        <taxon>Bacteria</taxon>
        <taxon>Bacillati</taxon>
        <taxon>Bacillota</taxon>
        <taxon>Bacilli</taxon>
        <taxon>Lactobacillales</taxon>
        <taxon>Streptococcaceae</taxon>
        <taxon>Streptococcus</taxon>
    </lineage>
</organism>
<dbReference type="EMBL" id="CP000725">
    <property type="protein sequence ID" value="ABV09152.1"/>
    <property type="molecule type" value="Genomic_DNA"/>
</dbReference>
<dbReference type="RefSeq" id="WP_008809305.1">
    <property type="nucleotide sequence ID" value="NC_009785.1"/>
</dbReference>
<dbReference type="SMR" id="A8AXZ1"/>
<dbReference type="STRING" id="467705.SGO_1370"/>
<dbReference type="KEGG" id="sgo:SGO_1370"/>
<dbReference type="eggNOG" id="COG3679">
    <property type="taxonomic scope" value="Bacteria"/>
</dbReference>
<dbReference type="HOGENOM" id="CLU_140243_2_0_9"/>
<dbReference type="Proteomes" id="UP000001131">
    <property type="component" value="Chromosome"/>
</dbReference>
<dbReference type="Gene3D" id="1.20.1500.10">
    <property type="entry name" value="YheA/YmcA-like"/>
    <property type="match status" value="1"/>
</dbReference>
<dbReference type="HAMAP" id="MF_01526">
    <property type="entry name" value="UPF0342"/>
    <property type="match status" value="1"/>
</dbReference>
<dbReference type="InterPro" id="IPR010368">
    <property type="entry name" value="Com_YlbF"/>
</dbReference>
<dbReference type="InterPro" id="IPR023378">
    <property type="entry name" value="YheA/YmcA-like_dom_sf"/>
</dbReference>
<dbReference type="NCBIfam" id="NF010209">
    <property type="entry name" value="PRK13676.1-1"/>
    <property type="match status" value="1"/>
</dbReference>
<dbReference type="Pfam" id="PF06133">
    <property type="entry name" value="Com_YlbF"/>
    <property type="match status" value="1"/>
</dbReference>
<dbReference type="SUPFAM" id="SSF158622">
    <property type="entry name" value="YheA/YmcA-like"/>
    <property type="match status" value="1"/>
</dbReference>
<comment type="similarity">
    <text evidence="1">Belongs to the UPF0342 family.</text>
</comment>
<gene>
    <name type="ordered locus">SGO_1370</name>
</gene>
<evidence type="ECO:0000255" key="1">
    <source>
        <dbReference type="HAMAP-Rule" id="MF_01526"/>
    </source>
</evidence>
<proteinExistence type="inferred from homology"/>
<accession>A8AXZ1</accession>
<sequence>MSNIYDLANELNRTFRELPEYKAVLESKAAIDADSEAKSLFDDYIAFQGKIQQLMQTGQMPTPELQEEMKSFGEKIQANAIVTEFFTKQQQLSVYLSDIERIVFEPIQDLMK</sequence>
<name>Y1370_STRGC</name>
<reference key="1">
    <citation type="journal article" date="2007" name="J. Bacteriol.">
        <title>Genome-wide transcriptional changes in Streptococcus gordonii in response to competence signaling peptide.</title>
        <authorList>
            <person name="Vickerman M.M."/>
            <person name="Iobst S."/>
            <person name="Jesionowski A.M."/>
            <person name="Gill S.R."/>
        </authorList>
    </citation>
    <scope>NUCLEOTIDE SEQUENCE [LARGE SCALE GENOMIC DNA]</scope>
    <source>
        <strain>Challis / ATCC 35105 / BCRC 15272 / CH1 / DL1 / V288</strain>
    </source>
</reference>
<feature type="chain" id="PRO_1000087579" description="UPF0342 protein SGO_1370">
    <location>
        <begin position="1"/>
        <end position="112"/>
    </location>
</feature>
<keyword id="KW-1185">Reference proteome</keyword>